<gene>
    <name evidence="1" type="primary">csrA</name>
    <name type="ordered locus">TM_0251</name>
</gene>
<protein>
    <recommendedName>
        <fullName evidence="1">Translational regulator CsrA</fullName>
    </recommendedName>
</protein>
<reference key="1">
    <citation type="journal article" date="1999" name="Nature">
        <title>Evidence for lateral gene transfer between Archaea and Bacteria from genome sequence of Thermotoga maritima.</title>
        <authorList>
            <person name="Nelson K.E."/>
            <person name="Clayton R.A."/>
            <person name="Gill S.R."/>
            <person name="Gwinn M.L."/>
            <person name="Dodson R.J."/>
            <person name="Haft D.H."/>
            <person name="Hickey E.K."/>
            <person name="Peterson J.D."/>
            <person name="Nelson W.C."/>
            <person name="Ketchum K.A."/>
            <person name="McDonald L.A."/>
            <person name="Utterback T.R."/>
            <person name="Malek J.A."/>
            <person name="Linher K.D."/>
            <person name="Garrett M.M."/>
            <person name="Stewart A.M."/>
            <person name="Cotton M.D."/>
            <person name="Pratt M.S."/>
            <person name="Phillips C.A."/>
            <person name="Richardson D.L."/>
            <person name="Heidelberg J.F."/>
            <person name="Sutton G.G."/>
            <person name="Fleischmann R.D."/>
            <person name="Eisen J.A."/>
            <person name="White O."/>
            <person name="Salzberg S.L."/>
            <person name="Smith H.O."/>
            <person name="Venter J.C."/>
            <person name="Fraser C.M."/>
        </authorList>
    </citation>
    <scope>NUCLEOTIDE SEQUENCE [LARGE SCALE GENOMIC DNA]</scope>
    <source>
        <strain>ATCC 43589 / DSM 3109 / JCM 10099 / NBRC 100826 / MSB8</strain>
    </source>
</reference>
<feature type="chain" id="PRO_0000177092" description="Translational regulator CsrA">
    <location>
        <begin position="1"/>
        <end position="83"/>
    </location>
</feature>
<keyword id="KW-1005">Bacterial flagellum biogenesis</keyword>
<keyword id="KW-0963">Cytoplasm</keyword>
<keyword id="KW-1185">Reference proteome</keyword>
<keyword id="KW-0678">Repressor</keyword>
<keyword id="KW-0694">RNA-binding</keyword>
<keyword id="KW-0810">Translation regulation</keyword>
<organism>
    <name type="scientific">Thermotoga maritima (strain ATCC 43589 / DSM 3109 / JCM 10099 / NBRC 100826 / MSB8)</name>
    <dbReference type="NCBI Taxonomy" id="243274"/>
    <lineage>
        <taxon>Bacteria</taxon>
        <taxon>Thermotogati</taxon>
        <taxon>Thermotogota</taxon>
        <taxon>Thermotogae</taxon>
        <taxon>Thermotogales</taxon>
        <taxon>Thermotogaceae</taxon>
        <taxon>Thermotoga</taxon>
    </lineage>
</organism>
<accession>Q9WY93</accession>
<dbReference type="EMBL" id="AE000512">
    <property type="protein sequence ID" value="AAD35354.1"/>
    <property type="molecule type" value="Genomic_DNA"/>
</dbReference>
<dbReference type="PIR" id="D72399">
    <property type="entry name" value="D72399"/>
</dbReference>
<dbReference type="RefSeq" id="NP_228065.1">
    <property type="nucleotide sequence ID" value="NC_000853.1"/>
</dbReference>
<dbReference type="RefSeq" id="WP_010865081.1">
    <property type="nucleotide sequence ID" value="NC_000853.1"/>
</dbReference>
<dbReference type="SMR" id="Q9WY93"/>
<dbReference type="FunCoup" id="Q9WY93">
    <property type="interactions" value="66"/>
</dbReference>
<dbReference type="STRING" id="243274.TM_0251"/>
<dbReference type="PaxDb" id="243274-THEMA_03470"/>
<dbReference type="DNASU" id="897159"/>
<dbReference type="EnsemblBacteria" id="AAD35354">
    <property type="protein sequence ID" value="AAD35354"/>
    <property type="gene ID" value="TM_0251"/>
</dbReference>
<dbReference type="KEGG" id="tma:TM0251"/>
<dbReference type="KEGG" id="tmi:THEMA_03470"/>
<dbReference type="KEGG" id="tmm:Tmari_0249"/>
<dbReference type="KEGG" id="tmw:THMA_0258"/>
<dbReference type="eggNOG" id="COG1551">
    <property type="taxonomic scope" value="Bacteria"/>
</dbReference>
<dbReference type="InParanoid" id="Q9WY93"/>
<dbReference type="OrthoDB" id="9809061at2"/>
<dbReference type="Proteomes" id="UP000008183">
    <property type="component" value="Chromosome"/>
</dbReference>
<dbReference type="GO" id="GO:0005829">
    <property type="term" value="C:cytosol"/>
    <property type="evidence" value="ECO:0000318"/>
    <property type="project" value="GO_Central"/>
</dbReference>
<dbReference type="GO" id="GO:0048027">
    <property type="term" value="F:mRNA 5'-UTR binding"/>
    <property type="evidence" value="ECO:0007669"/>
    <property type="project" value="UniProtKB-UniRule"/>
</dbReference>
<dbReference type="GO" id="GO:0044781">
    <property type="term" value="P:bacterial-type flagellum organization"/>
    <property type="evidence" value="ECO:0007669"/>
    <property type="project" value="UniProtKB-KW"/>
</dbReference>
<dbReference type="GO" id="GO:0006402">
    <property type="term" value="P:mRNA catabolic process"/>
    <property type="evidence" value="ECO:0007669"/>
    <property type="project" value="InterPro"/>
</dbReference>
<dbReference type="GO" id="GO:0045947">
    <property type="term" value="P:negative regulation of translational initiation"/>
    <property type="evidence" value="ECO:0007669"/>
    <property type="project" value="UniProtKB-UniRule"/>
</dbReference>
<dbReference type="GO" id="GO:1902208">
    <property type="term" value="P:regulation of bacterial-type flagellum assembly"/>
    <property type="evidence" value="ECO:0007669"/>
    <property type="project" value="UniProtKB-UniRule"/>
</dbReference>
<dbReference type="GO" id="GO:0006109">
    <property type="term" value="P:regulation of carbohydrate metabolic process"/>
    <property type="evidence" value="ECO:0007669"/>
    <property type="project" value="InterPro"/>
</dbReference>
<dbReference type="FunFam" id="2.60.40.4380:FF:000002">
    <property type="entry name" value="Translational regulator CsrA"/>
    <property type="match status" value="1"/>
</dbReference>
<dbReference type="Gene3D" id="2.60.40.4380">
    <property type="entry name" value="Translational regulator CsrA"/>
    <property type="match status" value="1"/>
</dbReference>
<dbReference type="HAMAP" id="MF_00167">
    <property type="entry name" value="CsrA"/>
    <property type="match status" value="1"/>
</dbReference>
<dbReference type="InterPro" id="IPR003751">
    <property type="entry name" value="CsrA"/>
</dbReference>
<dbReference type="InterPro" id="IPR036107">
    <property type="entry name" value="CsrA_sf"/>
</dbReference>
<dbReference type="NCBIfam" id="TIGR00202">
    <property type="entry name" value="csrA"/>
    <property type="match status" value="1"/>
</dbReference>
<dbReference type="NCBIfam" id="NF002469">
    <property type="entry name" value="PRK01712.1"/>
    <property type="match status" value="1"/>
</dbReference>
<dbReference type="PANTHER" id="PTHR34984">
    <property type="entry name" value="CARBON STORAGE REGULATOR"/>
    <property type="match status" value="1"/>
</dbReference>
<dbReference type="PANTHER" id="PTHR34984:SF1">
    <property type="entry name" value="CARBON STORAGE REGULATOR"/>
    <property type="match status" value="1"/>
</dbReference>
<dbReference type="Pfam" id="PF02599">
    <property type="entry name" value="CsrA"/>
    <property type="match status" value="1"/>
</dbReference>
<dbReference type="SUPFAM" id="SSF117130">
    <property type="entry name" value="CsrA-like"/>
    <property type="match status" value="1"/>
</dbReference>
<comment type="function">
    <text evidence="1">A translational regulator that binds mRNA to regulate translation initiation and/or mRNA stability. Usually binds in the 5'-UTR at or near the Shine-Dalgarno sequence preventing ribosome-binding, thus repressing translation. Its main target seems to be the major flagellin gene, while its function is anatagonized by FliW.</text>
</comment>
<comment type="subunit">
    <text evidence="1">Homodimer; the beta-strands of each monomer intercalate to form a hydrophobic core, while the alpha-helices form wings that extend away from the core.</text>
</comment>
<comment type="subcellular location">
    <subcellularLocation>
        <location evidence="1">Cytoplasm</location>
    </subcellularLocation>
</comment>
<comment type="similarity">
    <text evidence="1">Belongs to the CsrA/RsmA family.</text>
</comment>
<evidence type="ECO:0000255" key="1">
    <source>
        <dbReference type="HAMAP-Rule" id="MF_00167"/>
    </source>
</evidence>
<proteinExistence type="inferred from homology"/>
<sequence>MLVLTRRVGEKIVIGEDIVITVLKIEGNSVKIGIEAPKHVKILREELYEELKSENIKASEVSKDDLKGVLRNDKGYKGPSASS</sequence>
<name>CSRA_THEMA</name>